<name>RS6_ACICJ</name>
<gene>
    <name evidence="1" type="primary">rpsF</name>
    <name type="ordered locus">Acry_1512</name>
</gene>
<reference key="1">
    <citation type="submission" date="2007-05" db="EMBL/GenBank/DDBJ databases">
        <title>Complete sequence of chromosome of Acidiphilium cryptum JF-5.</title>
        <authorList>
            <consortium name="US DOE Joint Genome Institute"/>
            <person name="Copeland A."/>
            <person name="Lucas S."/>
            <person name="Lapidus A."/>
            <person name="Barry K."/>
            <person name="Detter J.C."/>
            <person name="Glavina del Rio T."/>
            <person name="Hammon N."/>
            <person name="Israni S."/>
            <person name="Dalin E."/>
            <person name="Tice H."/>
            <person name="Pitluck S."/>
            <person name="Sims D."/>
            <person name="Brettin T."/>
            <person name="Bruce D."/>
            <person name="Han C."/>
            <person name="Schmutz J."/>
            <person name="Larimer F."/>
            <person name="Land M."/>
            <person name="Hauser L."/>
            <person name="Kyrpides N."/>
            <person name="Kim E."/>
            <person name="Magnuson T."/>
            <person name="Richardson P."/>
        </authorList>
    </citation>
    <scope>NUCLEOTIDE SEQUENCE [LARGE SCALE GENOMIC DNA]</scope>
    <source>
        <strain>JF-5</strain>
    </source>
</reference>
<organism>
    <name type="scientific">Acidiphilium cryptum (strain JF-5)</name>
    <dbReference type="NCBI Taxonomy" id="349163"/>
    <lineage>
        <taxon>Bacteria</taxon>
        <taxon>Pseudomonadati</taxon>
        <taxon>Pseudomonadota</taxon>
        <taxon>Alphaproteobacteria</taxon>
        <taxon>Acetobacterales</taxon>
        <taxon>Acidocellaceae</taxon>
        <taxon>Acidiphilium</taxon>
    </lineage>
</organism>
<sequence length="158" mass="18261">MPLYECVLIARSEITQQQVDTIADAVTAQVESESGAVKKREYWGLRNLAYRIKKNRKGHYVLLGLDAEPATISEMERQLGLNEDVLRFMTVRVEDIDEAPSAPLARRGEDRDRDRGFRGPKPAGRFDSGRRRGADDREEYRARDEYRSDRDEDQNEEN</sequence>
<dbReference type="EMBL" id="CP000697">
    <property type="protein sequence ID" value="ABQ30720.1"/>
    <property type="molecule type" value="Genomic_DNA"/>
</dbReference>
<dbReference type="RefSeq" id="WP_007423703.1">
    <property type="nucleotide sequence ID" value="NC_009484.1"/>
</dbReference>
<dbReference type="SMR" id="A5FYN8"/>
<dbReference type="STRING" id="349163.Acry_1512"/>
<dbReference type="KEGG" id="acr:Acry_1512"/>
<dbReference type="eggNOG" id="COG0360">
    <property type="taxonomic scope" value="Bacteria"/>
</dbReference>
<dbReference type="HOGENOM" id="CLU_113441_2_0_5"/>
<dbReference type="Proteomes" id="UP000000245">
    <property type="component" value="Chromosome"/>
</dbReference>
<dbReference type="GO" id="GO:0022627">
    <property type="term" value="C:cytosolic small ribosomal subunit"/>
    <property type="evidence" value="ECO:0007669"/>
    <property type="project" value="TreeGrafter"/>
</dbReference>
<dbReference type="GO" id="GO:0070181">
    <property type="term" value="F:small ribosomal subunit rRNA binding"/>
    <property type="evidence" value="ECO:0007669"/>
    <property type="project" value="TreeGrafter"/>
</dbReference>
<dbReference type="GO" id="GO:0003735">
    <property type="term" value="F:structural constituent of ribosome"/>
    <property type="evidence" value="ECO:0007669"/>
    <property type="project" value="InterPro"/>
</dbReference>
<dbReference type="GO" id="GO:0006412">
    <property type="term" value="P:translation"/>
    <property type="evidence" value="ECO:0007669"/>
    <property type="project" value="UniProtKB-UniRule"/>
</dbReference>
<dbReference type="CDD" id="cd00473">
    <property type="entry name" value="bS6"/>
    <property type="match status" value="1"/>
</dbReference>
<dbReference type="Gene3D" id="3.30.70.60">
    <property type="match status" value="1"/>
</dbReference>
<dbReference type="HAMAP" id="MF_00360">
    <property type="entry name" value="Ribosomal_bS6"/>
    <property type="match status" value="1"/>
</dbReference>
<dbReference type="InterPro" id="IPR000529">
    <property type="entry name" value="Ribosomal_bS6"/>
</dbReference>
<dbReference type="InterPro" id="IPR020815">
    <property type="entry name" value="Ribosomal_bS6_CS"/>
</dbReference>
<dbReference type="InterPro" id="IPR035980">
    <property type="entry name" value="Ribosomal_bS6_sf"/>
</dbReference>
<dbReference type="InterPro" id="IPR020814">
    <property type="entry name" value="Ribosomal_S6_plastid/chlpt"/>
</dbReference>
<dbReference type="InterPro" id="IPR014717">
    <property type="entry name" value="Transl_elong_EF1B/ribsomal_bS6"/>
</dbReference>
<dbReference type="NCBIfam" id="TIGR00166">
    <property type="entry name" value="S6"/>
    <property type="match status" value="1"/>
</dbReference>
<dbReference type="PANTHER" id="PTHR21011">
    <property type="entry name" value="MITOCHONDRIAL 28S RIBOSOMAL PROTEIN S6"/>
    <property type="match status" value="1"/>
</dbReference>
<dbReference type="PANTHER" id="PTHR21011:SF1">
    <property type="entry name" value="SMALL RIBOSOMAL SUBUNIT PROTEIN BS6M"/>
    <property type="match status" value="1"/>
</dbReference>
<dbReference type="Pfam" id="PF01250">
    <property type="entry name" value="Ribosomal_S6"/>
    <property type="match status" value="1"/>
</dbReference>
<dbReference type="SUPFAM" id="SSF54995">
    <property type="entry name" value="Ribosomal protein S6"/>
    <property type="match status" value="1"/>
</dbReference>
<dbReference type="PROSITE" id="PS01048">
    <property type="entry name" value="RIBOSOMAL_S6"/>
    <property type="match status" value="1"/>
</dbReference>
<proteinExistence type="inferred from homology"/>
<protein>
    <recommendedName>
        <fullName evidence="1">Small ribosomal subunit protein bS6</fullName>
    </recommendedName>
    <alternativeName>
        <fullName evidence="3">30S ribosomal protein S6</fullName>
    </alternativeName>
</protein>
<feature type="chain" id="PRO_1000005205" description="Small ribosomal subunit protein bS6">
    <location>
        <begin position="1"/>
        <end position="158"/>
    </location>
</feature>
<feature type="region of interest" description="Disordered" evidence="2">
    <location>
        <begin position="98"/>
        <end position="158"/>
    </location>
</feature>
<feature type="compositionally biased region" description="Basic and acidic residues" evidence="2">
    <location>
        <begin position="106"/>
        <end position="117"/>
    </location>
</feature>
<feature type="compositionally biased region" description="Basic and acidic residues" evidence="2">
    <location>
        <begin position="127"/>
        <end position="150"/>
    </location>
</feature>
<accession>A5FYN8</accession>
<keyword id="KW-1185">Reference proteome</keyword>
<keyword id="KW-0687">Ribonucleoprotein</keyword>
<keyword id="KW-0689">Ribosomal protein</keyword>
<keyword id="KW-0694">RNA-binding</keyword>
<keyword id="KW-0699">rRNA-binding</keyword>
<evidence type="ECO:0000255" key="1">
    <source>
        <dbReference type="HAMAP-Rule" id="MF_00360"/>
    </source>
</evidence>
<evidence type="ECO:0000256" key="2">
    <source>
        <dbReference type="SAM" id="MobiDB-lite"/>
    </source>
</evidence>
<evidence type="ECO:0000305" key="3"/>
<comment type="function">
    <text evidence="1">Binds together with bS18 to 16S ribosomal RNA.</text>
</comment>
<comment type="similarity">
    <text evidence="1">Belongs to the bacterial ribosomal protein bS6 family.</text>
</comment>